<evidence type="ECO:0000255" key="1"/>
<evidence type="ECO:0000305" key="2"/>
<dbReference type="EMBL" id="AC021640">
    <property type="protein sequence ID" value="AAF32472.1"/>
    <property type="status" value="ALT_SEQ"/>
    <property type="molecule type" value="Genomic_DNA"/>
</dbReference>
<dbReference type="EMBL" id="CP002686">
    <property type="protein sequence ID" value="AEE73843.1"/>
    <property type="molecule type" value="Genomic_DNA"/>
</dbReference>
<dbReference type="RefSeq" id="NP_001189794.1">
    <property type="nucleotide sequence ID" value="NM_001202865.2"/>
</dbReference>
<dbReference type="STRING" id="3702.P0C897"/>
<dbReference type="GlyGen" id="P0C897">
    <property type="glycosylation" value="2 sites"/>
</dbReference>
<dbReference type="PaxDb" id="3702-AT3G02645.1"/>
<dbReference type="EnsemblPlants" id="AT3G02645.1">
    <property type="protein sequence ID" value="AT3G02645.1"/>
    <property type="gene ID" value="AT3G02645"/>
</dbReference>
<dbReference type="GeneID" id="10723101"/>
<dbReference type="Gramene" id="AT3G02645.1">
    <property type="protein sequence ID" value="AT3G02645.1"/>
    <property type="gene ID" value="AT3G02645"/>
</dbReference>
<dbReference type="KEGG" id="ath:AT3G02645"/>
<dbReference type="Araport" id="AT3G02645"/>
<dbReference type="TAIR" id="AT3G02645"/>
<dbReference type="eggNOG" id="ENOG502QPIE">
    <property type="taxonomic scope" value="Eukaryota"/>
</dbReference>
<dbReference type="HOGENOM" id="CLU_020188_4_0_1"/>
<dbReference type="InParanoid" id="P0C897"/>
<dbReference type="OMA" id="MFCTHET"/>
<dbReference type="OrthoDB" id="2356035at2759"/>
<dbReference type="PRO" id="PR:P0C897"/>
<dbReference type="Proteomes" id="UP000006548">
    <property type="component" value="Chromosome 3"/>
</dbReference>
<dbReference type="ExpressionAtlas" id="P0C897">
    <property type="expression patterns" value="baseline and differential"/>
</dbReference>
<dbReference type="GO" id="GO:0016020">
    <property type="term" value="C:membrane"/>
    <property type="evidence" value="ECO:0007669"/>
    <property type="project" value="UniProtKB-SubCell"/>
</dbReference>
<dbReference type="InterPro" id="IPR004158">
    <property type="entry name" value="DUF247_pln"/>
</dbReference>
<dbReference type="PANTHER" id="PTHR31170:SF25">
    <property type="entry name" value="BNAA09G04570D PROTEIN"/>
    <property type="match status" value="1"/>
</dbReference>
<dbReference type="PANTHER" id="PTHR31170">
    <property type="entry name" value="BNAC04G53230D PROTEIN"/>
    <property type="match status" value="1"/>
</dbReference>
<dbReference type="Pfam" id="PF03140">
    <property type="entry name" value="DUF247"/>
    <property type="match status" value="1"/>
</dbReference>
<comment type="subcellular location">
    <subcellularLocation>
        <location evidence="2">Membrane</location>
        <topology evidence="2">Single-pass membrane protein</topology>
    </subcellularLocation>
</comment>
<comment type="similarity">
    <text evidence="2">Belongs to the UPF0481 family.</text>
</comment>
<comment type="sequence caution" evidence="2">
    <conflict type="erroneous gene model prediction">
        <sequence resource="EMBL-CDS" id="AAF32472"/>
    </conflict>
    <text>The predicted gene has been split into 2 genes: At3g02645 and At3g02650.</text>
</comment>
<gene>
    <name type="ordered locus">At3g02645</name>
    <name type="ORF">F16B3.28</name>
</gene>
<accession>P0C897</accession>
<accession>Q9M877</accession>
<proteinExistence type="inferred from homology"/>
<reference key="1">
    <citation type="journal article" date="2000" name="Nature">
        <title>Sequence and analysis of chromosome 3 of the plant Arabidopsis thaliana.</title>
        <authorList>
            <person name="Salanoubat M."/>
            <person name="Lemcke K."/>
            <person name="Rieger M."/>
            <person name="Ansorge W."/>
            <person name="Unseld M."/>
            <person name="Fartmann B."/>
            <person name="Valle G."/>
            <person name="Bloecker H."/>
            <person name="Perez-Alonso M."/>
            <person name="Obermaier B."/>
            <person name="Delseny M."/>
            <person name="Boutry M."/>
            <person name="Grivell L.A."/>
            <person name="Mache R."/>
            <person name="Puigdomenech P."/>
            <person name="De Simone V."/>
            <person name="Choisne N."/>
            <person name="Artiguenave F."/>
            <person name="Robert C."/>
            <person name="Brottier P."/>
            <person name="Wincker P."/>
            <person name="Cattolico L."/>
            <person name="Weissenbach J."/>
            <person name="Saurin W."/>
            <person name="Quetier F."/>
            <person name="Schaefer M."/>
            <person name="Mueller-Auer S."/>
            <person name="Gabel C."/>
            <person name="Fuchs M."/>
            <person name="Benes V."/>
            <person name="Wurmbach E."/>
            <person name="Drzonek H."/>
            <person name="Erfle H."/>
            <person name="Jordan N."/>
            <person name="Bangert S."/>
            <person name="Wiedelmann R."/>
            <person name="Kranz H."/>
            <person name="Voss H."/>
            <person name="Holland R."/>
            <person name="Brandt P."/>
            <person name="Nyakatura G."/>
            <person name="Vezzi A."/>
            <person name="D'Angelo M."/>
            <person name="Pallavicini A."/>
            <person name="Toppo S."/>
            <person name="Simionati B."/>
            <person name="Conrad A."/>
            <person name="Hornischer K."/>
            <person name="Kauer G."/>
            <person name="Loehnert T.-H."/>
            <person name="Nordsiek G."/>
            <person name="Reichelt J."/>
            <person name="Scharfe M."/>
            <person name="Schoen O."/>
            <person name="Bargues M."/>
            <person name="Terol J."/>
            <person name="Climent J."/>
            <person name="Navarro P."/>
            <person name="Collado C."/>
            <person name="Perez-Perez A."/>
            <person name="Ottenwaelder B."/>
            <person name="Duchemin D."/>
            <person name="Cooke R."/>
            <person name="Laudie M."/>
            <person name="Berger-Llauro C."/>
            <person name="Purnelle B."/>
            <person name="Masuy D."/>
            <person name="de Haan M."/>
            <person name="Maarse A.C."/>
            <person name="Alcaraz J.-P."/>
            <person name="Cottet A."/>
            <person name="Casacuberta E."/>
            <person name="Monfort A."/>
            <person name="Argiriou A."/>
            <person name="Flores M."/>
            <person name="Liguori R."/>
            <person name="Vitale D."/>
            <person name="Mannhaupt G."/>
            <person name="Haase D."/>
            <person name="Schoof H."/>
            <person name="Rudd S."/>
            <person name="Zaccaria P."/>
            <person name="Mewes H.-W."/>
            <person name="Mayer K.F.X."/>
            <person name="Kaul S."/>
            <person name="Town C.D."/>
            <person name="Koo H.L."/>
            <person name="Tallon L.J."/>
            <person name="Jenkins J."/>
            <person name="Rooney T."/>
            <person name="Rizzo M."/>
            <person name="Walts A."/>
            <person name="Utterback T."/>
            <person name="Fujii C.Y."/>
            <person name="Shea T.P."/>
            <person name="Creasy T.H."/>
            <person name="Haas B."/>
            <person name="Maiti R."/>
            <person name="Wu D."/>
            <person name="Peterson J."/>
            <person name="Van Aken S."/>
            <person name="Pai G."/>
            <person name="Militscher J."/>
            <person name="Sellers P."/>
            <person name="Gill J.E."/>
            <person name="Feldblyum T.V."/>
            <person name="Preuss D."/>
            <person name="Lin X."/>
            <person name="Nierman W.C."/>
            <person name="Salzberg S.L."/>
            <person name="White O."/>
            <person name="Venter J.C."/>
            <person name="Fraser C.M."/>
            <person name="Kaneko T."/>
            <person name="Nakamura Y."/>
            <person name="Sato S."/>
            <person name="Kato T."/>
            <person name="Asamizu E."/>
            <person name="Sasamoto S."/>
            <person name="Kimura T."/>
            <person name="Idesawa K."/>
            <person name="Kawashima K."/>
            <person name="Kishida Y."/>
            <person name="Kiyokawa C."/>
            <person name="Kohara M."/>
            <person name="Matsumoto M."/>
            <person name="Matsuno A."/>
            <person name="Muraki A."/>
            <person name="Nakayama S."/>
            <person name="Nakazaki N."/>
            <person name="Shinpo S."/>
            <person name="Takeuchi C."/>
            <person name="Wada T."/>
            <person name="Watanabe A."/>
            <person name="Yamada M."/>
            <person name="Yasuda M."/>
            <person name="Tabata S."/>
        </authorList>
    </citation>
    <scope>NUCLEOTIDE SEQUENCE [LARGE SCALE GENOMIC DNA]</scope>
    <source>
        <strain>cv. Columbia</strain>
    </source>
</reference>
<reference key="2">
    <citation type="journal article" date="2017" name="Plant J.">
        <title>Araport11: a complete reannotation of the Arabidopsis thaliana reference genome.</title>
        <authorList>
            <person name="Cheng C.Y."/>
            <person name="Krishnakumar V."/>
            <person name="Chan A.P."/>
            <person name="Thibaud-Nissen F."/>
            <person name="Schobel S."/>
            <person name="Town C.D."/>
        </authorList>
    </citation>
    <scope>GENOME REANNOTATION</scope>
    <source>
        <strain>cv. Columbia</strain>
    </source>
</reference>
<protein>
    <recommendedName>
        <fullName>Putative UPF0481 protein At3g02645</fullName>
    </recommendedName>
</protein>
<name>Y3264_ARATH</name>
<sequence>MLPKKPIFSSTEQHRFDETRWVINVQKSLDAELEEHDLEEVTVSIFNVPKALMCSHPDSYTPHRVSIGPYHCLKPELHEMERYKLMIARKIRNQYNSFRFHDLVEKLQSMEIKIRACYHKYIGFNGETLLWIMAVDSSFLIEFLKIYSFRKVETLINRVGHNEILRDIMMIENQIPLFVLRKTLEFQLESTESADDLLLSVLTGLCKDLSPLVIKFDDDQILKAQFQECNHILDFLYQMIVPRIEEEELEEDDEENRADENGGNRAIRFMDEIKHQFKRVFASRPADLILRFPWRIISNLPGFMALKLSADYLFTRQENEATTTRQESVSILDIEKPPLVEELTIPSVSDLHKAGVRFKPTAHGNISTVTFDSNSGQFYLPVINLDINTETVLRNLVAYEATNTSGPLVFTRYTELINGIIDSEEDVRLLREQGVLVSRLKSDQEAAEMWNGMSKSVRLTKVGFLDKTIEDVNRYYTGRWKVKIGRLVEVYVYGSWQILAFLAAVLLLMLVSLQLFSLVFSSFLRFRAG</sequence>
<feature type="chain" id="PRO_0000355992" description="Putative UPF0481 protein At3g02645">
    <location>
        <begin position="1"/>
        <end position="529"/>
    </location>
</feature>
<feature type="transmembrane region" description="Helical" evidence="1">
    <location>
        <begin position="498"/>
        <end position="518"/>
    </location>
</feature>
<feature type="glycosylation site" description="N-linked (GlcNAc...) asparagine" evidence="1">
    <location>
        <position position="365"/>
    </location>
</feature>
<feature type="glycosylation site" description="N-linked (GlcNAc...) asparagine" evidence="1">
    <location>
        <position position="403"/>
    </location>
</feature>
<organism>
    <name type="scientific">Arabidopsis thaliana</name>
    <name type="common">Mouse-ear cress</name>
    <dbReference type="NCBI Taxonomy" id="3702"/>
    <lineage>
        <taxon>Eukaryota</taxon>
        <taxon>Viridiplantae</taxon>
        <taxon>Streptophyta</taxon>
        <taxon>Embryophyta</taxon>
        <taxon>Tracheophyta</taxon>
        <taxon>Spermatophyta</taxon>
        <taxon>Magnoliopsida</taxon>
        <taxon>eudicotyledons</taxon>
        <taxon>Gunneridae</taxon>
        <taxon>Pentapetalae</taxon>
        <taxon>rosids</taxon>
        <taxon>malvids</taxon>
        <taxon>Brassicales</taxon>
        <taxon>Brassicaceae</taxon>
        <taxon>Camelineae</taxon>
        <taxon>Arabidopsis</taxon>
    </lineage>
</organism>
<keyword id="KW-0325">Glycoprotein</keyword>
<keyword id="KW-0472">Membrane</keyword>
<keyword id="KW-1185">Reference proteome</keyword>
<keyword id="KW-0812">Transmembrane</keyword>
<keyword id="KW-1133">Transmembrane helix</keyword>